<keyword id="KW-0067">ATP-binding</keyword>
<keyword id="KW-0131">Cell cycle</keyword>
<keyword id="KW-0132">Cell division</keyword>
<keyword id="KW-0133">Cell shape</keyword>
<keyword id="KW-0961">Cell wall biogenesis/degradation</keyword>
<keyword id="KW-0963">Cytoplasm</keyword>
<keyword id="KW-0436">Ligase</keyword>
<keyword id="KW-0460">Magnesium</keyword>
<keyword id="KW-0547">Nucleotide-binding</keyword>
<keyword id="KW-0573">Peptidoglycan synthesis</keyword>
<sequence>MADRNLRDLLAPWVQNVPARALREMVLDSRVAASGDLFVAVVGHQADGRRYIPQAIAQGVAAIIAEAKDDATDGEIREMHGVPVIYLSQLNERLSALAGRFYHEPSDQLRLVGVTGTNGKTTTTQLMAQWAQLLGETGAVMGTVGNGLLGKVNPTENTTGSAVDVQHVLSGLAGQGATFAAMEVSSHGLVQHRVSALKFAASVFTNLSRDHLDYHGDMENYEAAKWLLYSTHHCGQAIINADDEVGRRWLAKLPDAVAVSMEDHINPNCHGRWLKATDVDYHDSGATIRFASSWGEGEIESRLMGAFNVSNLLLALATLLALDYPLSELVNTGARLQPVCGRMEVFTAPGKPTVVVDYAHTPDALEKALQAARLHCTGKLWCVFGCGGDRDKGKRPLMGAIAEQFADIPVVTDDNPRTEEPRAIINDILAGMMDAGHARVVEGRAEAVTNAIMQAKENDVVLLAGKGHEDYQIVGAHRLDYSDRVTAARLLGALA</sequence>
<gene>
    <name evidence="1" type="primary">murE</name>
    <name type="ordered locus">Ent638_0631</name>
</gene>
<organism>
    <name type="scientific">Enterobacter sp. (strain 638)</name>
    <dbReference type="NCBI Taxonomy" id="399742"/>
    <lineage>
        <taxon>Bacteria</taxon>
        <taxon>Pseudomonadati</taxon>
        <taxon>Pseudomonadota</taxon>
        <taxon>Gammaproteobacteria</taxon>
        <taxon>Enterobacterales</taxon>
        <taxon>Enterobacteriaceae</taxon>
        <taxon>Enterobacter</taxon>
    </lineage>
</organism>
<protein>
    <recommendedName>
        <fullName evidence="1">UDP-N-acetylmuramoyl-L-alanyl-D-glutamate--2,6-diaminopimelate ligase</fullName>
        <ecNumber evidence="1">6.3.2.13</ecNumber>
    </recommendedName>
    <alternativeName>
        <fullName evidence="1">Meso-A2pm-adding enzyme</fullName>
    </alternativeName>
    <alternativeName>
        <fullName evidence="1">Meso-diaminopimelate-adding enzyme</fullName>
    </alternativeName>
    <alternativeName>
        <fullName evidence="1">UDP-MurNAc-L-Ala-D-Glu:meso-diaminopimelate ligase</fullName>
    </alternativeName>
    <alternativeName>
        <fullName evidence="1">UDP-MurNAc-tripeptide synthetase</fullName>
    </alternativeName>
    <alternativeName>
        <fullName evidence="1">UDP-N-acetylmuramyl-tripeptide synthetase</fullName>
    </alternativeName>
</protein>
<evidence type="ECO:0000255" key="1">
    <source>
        <dbReference type="HAMAP-Rule" id="MF_00208"/>
    </source>
</evidence>
<name>MURE_ENT38</name>
<accession>A4W6I8</accession>
<dbReference type="EC" id="6.3.2.13" evidence="1"/>
<dbReference type="EMBL" id="CP000653">
    <property type="protein sequence ID" value="ABP59318.1"/>
    <property type="molecule type" value="Genomic_DNA"/>
</dbReference>
<dbReference type="RefSeq" id="WP_012016040.1">
    <property type="nucleotide sequence ID" value="NC_009436.1"/>
</dbReference>
<dbReference type="SMR" id="A4W6I8"/>
<dbReference type="STRING" id="399742.Ent638_0631"/>
<dbReference type="KEGG" id="ent:Ent638_0631"/>
<dbReference type="eggNOG" id="COG0769">
    <property type="taxonomic scope" value="Bacteria"/>
</dbReference>
<dbReference type="HOGENOM" id="CLU_022291_3_2_6"/>
<dbReference type="OrthoDB" id="9800958at2"/>
<dbReference type="UniPathway" id="UPA00219"/>
<dbReference type="Proteomes" id="UP000000230">
    <property type="component" value="Chromosome"/>
</dbReference>
<dbReference type="GO" id="GO:0005737">
    <property type="term" value="C:cytoplasm"/>
    <property type="evidence" value="ECO:0007669"/>
    <property type="project" value="UniProtKB-SubCell"/>
</dbReference>
<dbReference type="GO" id="GO:0005524">
    <property type="term" value="F:ATP binding"/>
    <property type="evidence" value="ECO:0007669"/>
    <property type="project" value="UniProtKB-UniRule"/>
</dbReference>
<dbReference type="GO" id="GO:0000287">
    <property type="term" value="F:magnesium ion binding"/>
    <property type="evidence" value="ECO:0007669"/>
    <property type="project" value="UniProtKB-UniRule"/>
</dbReference>
<dbReference type="GO" id="GO:0008765">
    <property type="term" value="F:UDP-N-acetylmuramoylalanyl-D-glutamate-2,6-diaminopimelate ligase activity"/>
    <property type="evidence" value="ECO:0007669"/>
    <property type="project" value="UniProtKB-UniRule"/>
</dbReference>
<dbReference type="GO" id="GO:0051301">
    <property type="term" value="P:cell division"/>
    <property type="evidence" value="ECO:0007669"/>
    <property type="project" value="UniProtKB-KW"/>
</dbReference>
<dbReference type="GO" id="GO:0071555">
    <property type="term" value="P:cell wall organization"/>
    <property type="evidence" value="ECO:0007669"/>
    <property type="project" value="UniProtKB-KW"/>
</dbReference>
<dbReference type="GO" id="GO:0009252">
    <property type="term" value="P:peptidoglycan biosynthetic process"/>
    <property type="evidence" value="ECO:0007669"/>
    <property type="project" value="UniProtKB-UniRule"/>
</dbReference>
<dbReference type="GO" id="GO:0008360">
    <property type="term" value="P:regulation of cell shape"/>
    <property type="evidence" value="ECO:0007669"/>
    <property type="project" value="UniProtKB-KW"/>
</dbReference>
<dbReference type="FunFam" id="3.40.1190.10:FF:000006">
    <property type="entry name" value="UDP-N-acetylmuramoyl-L-alanyl-D-glutamate--2,6-diaminopimelate ligase"/>
    <property type="match status" value="1"/>
</dbReference>
<dbReference type="FunFam" id="3.40.1390.10:FF:000002">
    <property type="entry name" value="UDP-N-acetylmuramoyl-L-alanyl-D-glutamate--2,6-diaminopimelate ligase"/>
    <property type="match status" value="1"/>
</dbReference>
<dbReference type="FunFam" id="3.90.190.20:FF:000006">
    <property type="entry name" value="UDP-N-acetylmuramoyl-L-alanyl-D-glutamate--2,6-diaminopimelate ligase"/>
    <property type="match status" value="1"/>
</dbReference>
<dbReference type="Gene3D" id="3.90.190.20">
    <property type="entry name" value="Mur ligase, C-terminal domain"/>
    <property type="match status" value="1"/>
</dbReference>
<dbReference type="Gene3D" id="3.40.1190.10">
    <property type="entry name" value="Mur-like, catalytic domain"/>
    <property type="match status" value="1"/>
</dbReference>
<dbReference type="Gene3D" id="3.40.1390.10">
    <property type="entry name" value="MurE/MurF, N-terminal domain"/>
    <property type="match status" value="1"/>
</dbReference>
<dbReference type="HAMAP" id="MF_00208">
    <property type="entry name" value="MurE"/>
    <property type="match status" value="1"/>
</dbReference>
<dbReference type="InterPro" id="IPR036565">
    <property type="entry name" value="Mur-like_cat_sf"/>
</dbReference>
<dbReference type="InterPro" id="IPR004101">
    <property type="entry name" value="Mur_ligase_C"/>
</dbReference>
<dbReference type="InterPro" id="IPR036615">
    <property type="entry name" value="Mur_ligase_C_dom_sf"/>
</dbReference>
<dbReference type="InterPro" id="IPR013221">
    <property type="entry name" value="Mur_ligase_cen"/>
</dbReference>
<dbReference type="InterPro" id="IPR000713">
    <property type="entry name" value="Mur_ligase_N"/>
</dbReference>
<dbReference type="InterPro" id="IPR035911">
    <property type="entry name" value="MurE/MurF_N"/>
</dbReference>
<dbReference type="InterPro" id="IPR005761">
    <property type="entry name" value="UDP-N-AcMur-Glu-dNH2Pim_ligase"/>
</dbReference>
<dbReference type="NCBIfam" id="TIGR01085">
    <property type="entry name" value="murE"/>
    <property type="match status" value="1"/>
</dbReference>
<dbReference type="NCBIfam" id="NF001123">
    <property type="entry name" value="PRK00139.1-1"/>
    <property type="match status" value="1"/>
</dbReference>
<dbReference type="NCBIfam" id="NF001124">
    <property type="entry name" value="PRK00139.1-2"/>
    <property type="match status" value="1"/>
</dbReference>
<dbReference type="NCBIfam" id="NF001126">
    <property type="entry name" value="PRK00139.1-4"/>
    <property type="match status" value="1"/>
</dbReference>
<dbReference type="PANTHER" id="PTHR23135">
    <property type="entry name" value="MUR LIGASE FAMILY MEMBER"/>
    <property type="match status" value="1"/>
</dbReference>
<dbReference type="PANTHER" id="PTHR23135:SF4">
    <property type="entry name" value="UDP-N-ACETYLMURAMOYL-L-ALANYL-D-GLUTAMATE--2,6-DIAMINOPIMELATE LIGASE MURE HOMOLOG, CHLOROPLASTIC"/>
    <property type="match status" value="1"/>
</dbReference>
<dbReference type="Pfam" id="PF01225">
    <property type="entry name" value="Mur_ligase"/>
    <property type="match status" value="1"/>
</dbReference>
<dbReference type="Pfam" id="PF02875">
    <property type="entry name" value="Mur_ligase_C"/>
    <property type="match status" value="1"/>
</dbReference>
<dbReference type="Pfam" id="PF08245">
    <property type="entry name" value="Mur_ligase_M"/>
    <property type="match status" value="1"/>
</dbReference>
<dbReference type="SUPFAM" id="SSF53623">
    <property type="entry name" value="MurD-like peptide ligases, catalytic domain"/>
    <property type="match status" value="1"/>
</dbReference>
<dbReference type="SUPFAM" id="SSF53244">
    <property type="entry name" value="MurD-like peptide ligases, peptide-binding domain"/>
    <property type="match status" value="1"/>
</dbReference>
<dbReference type="SUPFAM" id="SSF63418">
    <property type="entry name" value="MurE/MurF N-terminal domain"/>
    <property type="match status" value="1"/>
</dbReference>
<comment type="function">
    <text evidence="1">Catalyzes the addition of meso-diaminopimelic acid to the nucleotide precursor UDP-N-acetylmuramoyl-L-alanyl-D-glutamate (UMAG) in the biosynthesis of bacterial cell-wall peptidoglycan.</text>
</comment>
<comment type="catalytic activity">
    <reaction evidence="1">
        <text>UDP-N-acetyl-alpha-D-muramoyl-L-alanyl-D-glutamate + meso-2,6-diaminopimelate + ATP = UDP-N-acetyl-alpha-D-muramoyl-L-alanyl-gamma-D-glutamyl-meso-2,6-diaminopimelate + ADP + phosphate + H(+)</text>
        <dbReference type="Rhea" id="RHEA:23676"/>
        <dbReference type="ChEBI" id="CHEBI:15378"/>
        <dbReference type="ChEBI" id="CHEBI:30616"/>
        <dbReference type="ChEBI" id="CHEBI:43474"/>
        <dbReference type="ChEBI" id="CHEBI:57791"/>
        <dbReference type="ChEBI" id="CHEBI:83900"/>
        <dbReference type="ChEBI" id="CHEBI:83905"/>
        <dbReference type="ChEBI" id="CHEBI:456216"/>
        <dbReference type="EC" id="6.3.2.13"/>
    </reaction>
</comment>
<comment type="cofactor">
    <cofactor evidence="1">
        <name>Mg(2+)</name>
        <dbReference type="ChEBI" id="CHEBI:18420"/>
    </cofactor>
</comment>
<comment type="pathway">
    <text evidence="1">Cell wall biogenesis; peptidoglycan biosynthesis.</text>
</comment>
<comment type="subcellular location">
    <subcellularLocation>
        <location evidence="1">Cytoplasm</location>
    </subcellularLocation>
</comment>
<comment type="PTM">
    <text evidence="1">Carboxylation is probably crucial for Mg(2+) binding and, consequently, for the gamma-phosphate positioning of ATP.</text>
</comment>
<comment type="similarity">
    <text evidence="1">Belongs to the MurCDEF family. MurE subfamily.</text>
</comment>
<reference key="1">
    <citation type="journal article" date="2010" name="PLoS Genet.">
        <title>Genome sequence of the plant growth promoting endophytic bacterium Enterobacter sp. 638.</title>
        <authorList>
            <person name="Taghavi S."/>
            <person name="van der Lelie D."/>
            <person name="Hoffman A."/>
            <person name="Zhang Y.B."/>
            <person name="Walla M.D."/>
            <person name="Vangronsveld J."/>
            <person name="Newman L."/>
            <person name="Monchy S."/>
        </authorList>
    </citation>
    <scope>NUCLEOTIDE SEQUENCE [LARGE SCALE GENOMIC DNA]</scope>
    <source>
        <strain>638</strain>
    </source>
</reference>
<feature type="chain" id="PRO_1000058587" description="UDP-N-acetylmuramoyl-L-alanyl-D-glutamate--2,6-diaminopimelate ligase">
    <location>
        <begin position="1"/>
        <end position="495"/>
    </location>
</feature>
<feature type="short sequence motif" description="Meso-diaminopimelate recognition motif">
    <location>
        <begin position="414"/>
        <end position="417"/>
    </location>
</feature>
<feature type="binding site" evidence="1">
    <location>
        <position position="27"/>
    </location>
    <ligand>
        <name>UDP-N-acetyl-alpha-D-muramoyl-L-alanyl-D-glutamate</name>
        <dbReference type="ChEBI" id="CHEBI:83900"/>
    </ligand>
</feature>
<feature type="binding site" evidence="1">
    <location>
        <position position="29"/>
    </location>
    <ligand>
        <name>UDP-N-acetyl-alpha-D-muramoyl-L-alanyl-D-glutamate</name>
        <dbReference type="ChEBI" id="CHEBI:83900"/>
    </ligand>
</feature>
<feature type="binding site" evidence="1">
    <location>
        <begin position="44"/>
        <end position="46"/>
    </location>
    <ligand>
        <name>UDP-N-acetyl-alpha-D-muramoyl-L-alanyl-D-glutamate</name>
        <dbReference type="ChEBI" id="CHEBI:83900"/>
    </ligand>
</feature>
<feature type="binding site" evidence="1">
    <location>
        <begin position="116"/>
        <end position="122"/>
    </location>
    <ligand>
        <name>ATP</name>
        <dbReference type="ChEBI" id="CHEBI:30616"/>
    </ligand>
</feature>
<feature type="binding site" evidence="1">
    <location>
        <position position="157"/>
    </location>
    <ligand>
        <name>UDP-N-acetyl-alpha-D-muramoyl-L-alanyl-D-glutamate</name>
        <dbReference type="ChEBI" id="CHEBI:83900"/>
    </ligand>
</feature>
<feature type="binding site" evidence="1">
    <location>
        <begin position="158"/>
        <end position="159"/>
    </location>
    <ligand>
        <name>UDP-N-acetyl-alpha-D-muramoyl-L-alanyl-D-glutamate</name>
        <dbReference type="ChEBI" id="CHEBI:83900"/>
    </ligand>
</feature>
<feature type="binding site" evidence="1">
    <location>
        <position position="185"/>
    </location>
    <ligand>
        <name>UDP-N-acetyl-alpha-D-muramoyl-L-alanyl-D-glutamate</name>
        <dbReference type="ChEBI" id="CHEBI:83900"/>
    </ligand>
</feature>
<feature type="binding site" evidence="1">
    <location>
        <position position="191"/>
    </location>
    <ligand>
        <name>UDP-N-acetyl-alpha-D-muramoyl-L-alanyl-D-glutamate</name>
        <dbReference type="ChEBI" id="CHEBI:83900"/>
    </ligand>
</feature>
<feature type="binding site" evidence="1">
    <location>
        <position position="193"/>
    </location>
    <ligand>
        <name>UDP-N-acetyl-alpha-D-muramoyl-L-alanyl-D-glutamate</name>
        <dbReference type="ChEBI" id="CHEBI:83900"/>
    </ligand>
</feature>
<feature type="binding site" evidence="1">
    <location>
        <position position="390"/>
    </location>
    <ligand>
        <name>meso-2,6-diaminopimelate</name>
        <dbReference type="ChEBI" id="CHEBI:57791"/>
    </ligand>
</feature>
<feature type="binding site" evidence="1">
    <location>
        <begin position="414"/>
        <end position="417"/>
    </location>
    <ligand>
        <name>meso-2,6-diaminopimelate</name>
        <dbReference type="ChEBI" id="CHEBI:57791"/>
    </ligand>
</feature>
<feature type="binding site" evidence="1">
    <location>
        <position position="465"/>
    </location>
    <ligand>
        <name>meso-2,6-diaminopimelate</name>
        <dbReference type="ChEBI" id="CHEBI:57791"/>
    </ligand>
</feature>
<feature type="binding site" evidence="1">
    <location>
        <position position="469"/>
    </location>
    <ligand>
        <name>meso-2,6-diaminopimelate</name>
        <dbReference type="ChEBI" id="CHEBI:57791"/>
    </ligand>
</feature>
<feature type="modified residue" description="N6-carboxylysine" evidence="1">
    <location>
        <position position="225"/>
    </location>
</feature>
<proteinExistence type="inferred from homology"/>